<feature type="chain" id="PRO_0000200211" description="Homeobox protein Hox-D4">
    <location>
        <begin position="1"/>
        <end position="250"/>
    </location>
</feature>
<feature type="DNA-binding region" description="Homeobox" evidence="1">
    <location>
        <begin position="152"/>
        <end position="211"/>
    </location>
</feature>
<feature type="region of interest" description="Disordered" evidence="2">
    <location>
        <begin position="31"/>
        <end position="126"/>
    </location>
</feature>
<feature type="region of interest" description="Disordered" evidence="2">
    <location>
        <begin position="210"/>
        <end position="250"/>
    </location>
</feature>
<feature type="short sequence motif" description="Antp-type hexapeptide">
    <location>
        <begin position="131"/>
        <end position="136"/>
    </location>
</feature>
<feature type="compositionally biased region" description="Low complexity" evidence="2">
    <location>
        <begin position="105"/>
        <end position="115"/>
    </location>
</feature>
<feature type="compositionally biased region" description="Low complexity" evidence="2">
    <location>
        <begin position="220"/>
        <end position="229"/>
    </location>
</feature>
<feature type="compositionally biased region" description="Basic and acidic residues" evidence="2">
    <location>
        <begin position="240"/>
        <end position="250"/>
    </location>
</feature>
<feature type="sequence conflict" description="In Ref. 1 and 3." evidence="4" ref="1 3">
    <original>R</original>
    <variation>P</variation>
    <location>
        <position position="95"/>
    </location>
</feature>
<feature type="sequence conflict" description="In Ref. 1; AAA20072." evidence="4" ref="1">
    <original>V</original>
    <variation>A</variation>
    <location>
        <position position="143"/>
    </location>
</feature>
<proteinExistence type="evidence at protein level"/>
<organism>
    <name type="scientific">Mus musculus</name>
    <name type="common">Mouse</name>
    <dbReference type="NCBI Taxonomy" id="10090"/>
    <lineage>
        <taxon>Eukaryota</taxon>
        <taxon>Metazoa</taxon>
        <taxon>Chordata</taxon>
        <taxon>Craniata</taxon>
        <taxon>Vertebrata</taxon>
        <taxon>Euteleostomi</taxon>
        <taxon>Mammalia</taxon>
        <taxon>Eutheria</taxon>
        <taxon>Euarchontoglires</taxon>
        <taxon>Glires</taxon>
        <taxon>Rodentia</taxon>
        <taxon>Myomorpha</taxon>
        <taxon>Muroidea</taxon>
        <taxon>Muridae</taxon>
        <taxon>Murinae</taxon>
        <taxon>Mus</taxon>
        <taxon>Mus</taxon>
    </lineage>
</organism>
<reference key="1">
    <citation type="journal article" date="1988" name="Proc. Natl. Acad. Sci. U.S.A.">
        <title>Hox-5.1 defines a homeobox-containing gene locus on mouse chromosome 2.</title>
        <authorList>
            <person name="Featherstone M.S."/>
            <person name="Baron A."/>
            <person name="Gaunt S.J."/>
            <person name="Mattei M.-G."/>
            <person name="Duboule D."/>
        </authorList>
    </citation>
    <scope>NUCLEOTIDE SEQUENCE [MRNA]</scope>
</reference>
<reference key="2">
    <citation type="journal article" date="1994" name="Nucleic Acids Res.">
        <title>A proline-rich transcriptional activation domain in murine HOXD-4 (HOX-4.2).</title>
        <authorList>
            <person name="Rambaldi I."/>
            <person name="Kovacs E.N."/>
            <person name="Featherstone M.S."/>
        </authorList>
    </citation>
    <scope>SEQUENCE REVISION</scope>
</reference>
<reference key="3">
    <citation type="journal article" date="1997" name="J. Biol. Chem.">
        <title>Characterization and retinoic acid responsiveness of the murine Hoxd4 transcription unit.</title>
        <authorList>
            <person name="Folberg A."/>
            <person name="Kovacs E.N."/>
            <person name="Featherstone M.S."/>
        </authorList>
    </citation>
    <scope>NUCLEOTIDE SEQUENCE [GENOMIC DNA]</scope>
    <source>
        <strain>129/Sv</strain>
    </source>
</reference>
<reference key="4">
    <citation type="journal article" date="2005" name="Science">
        <title>The transcriptional landscape of the mammalian genome.</title>
        <authorList>
            <person name="Carninci P."/>
            <person name="Kasukawa T."/>
            <person name="Katayama S."/>
            <person name="Gough J."/>
            <person name="Frith M.C."/>
            <person name="Maeda N."/>
            <person name="Oyama R."/>
            <person name="Ravasi T."/>
            <person name="Lenhard B."/>
            <person name="Wells C."/>
            <person name="Kodzius R."/>
            <person name="Shimokawa K."/>
            <person name="Bajic V.B."/>
            <person name="Brenner S.E."/>
            <person name="Batalov S."/>
            <person name="Forrest A.R."/>
            <person name="Zavolan M."/>
            <person name="Davis M.J."/>
            <person name="Wilming L.G."/>
            <person name="Aidinis V."/>
            <person name="Allen J.E."/>
            <person name="Ambesi-Impiombato A."/>
            <person name="Apweiler R."/>
            <person name="Aturaliya R.N."/>
            <person name="Bailey T.L."/>
            <person name="Bansal M."/>
            <person name="Baxter L."/>
            <person name="Beisel K.W."/>
            <person name="Bersano T."/>
            <person name="Bono H."/>
            <person name="Chalk A.M."/>
            <person name="Chiu K.P."/>
            <person name="Choudhary V."/>
            <person name="Christoffels A."/>
            <person name="Clutterbuck D.R."/>
            <person name="Crowe M.L."/>
            <person name="Dalla E."/>
            <person name="Dalrymple B.P."/>
            <person name="de Bono B."/>
            <person name="Della Gatta G."/>
            <person name="di Bernardo D."/>
            <person name="Down T."/>
            <person name="Engstrom P."/>
            <person name="Fagiolini M."/>
            <person name="Faulkner G."/>
            <person name="Fletcher C.F."/>
            <person name="Fukushima T."/>
            <person name="Furuno M."/>
            <person name="Futaki S."/>
            <person name="Gariboldi M."/>
            <person name="Georgii-Hemming P."/>
            <person name="Gingeras T.R."/>
            <person name="Gojobori T."/>
            <person name="Green R.E."/>
            <person name="Gustincich S."/>
            <person name="Harbers M."/>
            <person name="Hayashi Y."/>
            <person name="Hensch T.K."/>
            <person name="Hirokawa N."/>
            <person name="Hill D."/>
            <person name="Huminiecki L."/>
            <person name="Iacono M."/>
            <person name="Ikeo K."/>
            <person name="Iwama A."/>
            <person name="Ishikawa T."/>
            <person name="Jakt M."/>
            <person name="Kanapin A."/>
            <person name="Katoh M."/>
            <person name="Kawasawa Y."/>
            <person name="Kelso J."/>
            <person name="Kitamura H."/>
            <person name="Kitano H."/>
            <person name="Kollias G."/>
            <person name="Krishnan S.P."/>
            <person name="Kruger A."/>
            <person name="Kummerfeld S.K."/>
            <person name="Kurochkin I.V."/>
            <person name="Lareau L.F."/>
            <person name="Lazarevic D."/>
            <person name="Lipovich L."/>
            <person name="Liu J."/>
            <person name="Liuni S."/>
            <person name="McWilliam S."/>
            <person name="Madan Babu M."/>
            <person name="Madera M."/>
            <person name="Marchionni L."/>
            <person name="Matsuda H."/>
            <person name="Matsuzawa S."/>
            <person name="Miki H."/>
            <person name="Mignone F."/>
            <person name="Miyake S."/>
            <person name="Morris K."/>
            <person name="Mottagui-Tabar S."/>
            <person name="Mulder N."/>
            <person name="Nakano N."/>
            <person name="Nakauchi H."/>
            <person name="Ng P."/>
            <person name="Nilsson R."/>
            <person name="Nishiguchi S."/>
            <person name="Nishikawa S."/>
            <person name="Nori F."/>
            <person name="Ohara O."/>
            <person name="Okazaki Y."/>
            <person name="Orlando V."/>
            <person name="Pang K.C."/>
            <person name="Pavan W.J."/>
            <person name="Pavesi G."/>
            <person name="Pesole G."/>
            <person name="Petrovsky N."/>
            <person name="Piazza S."/>
            <person name="Reed J."/>
            <person name="Reid J.F."/>
            <person name="Ring B.Z."/>
            <person name="Ringwald M."/>
            <person name="Rost B."/>
            <person name="Ruan Y."/>
            <person name="Salzberg S.L."/>
            <person name="Sandelin A."/>
            <person name="Schneider C."/>
            <person name="Schoenbach C."/>
            <person name="Sekiguchi K."/>
            <person name="Semple C.A."/>
            <person name="Seno S."/>
            <person name="Sessa L."/>
            <person name="Sheng Y."/>
            <person name="Shibata Y."/>
            <person name="Shimada H."/>
            <person name="Shimada K."/>
            <person name="Silva D."/>
            <person name="Sinclair B."/>
            <person name="Sperling S."/>
            <person name="Stupka E."/>
            <person name="Sugiura K."/>
            <person name="Sultana R."/>
            <person name="Takenaka Y."/>
            <person name="Taki K."/>
            <person name="Tammoja K."/>
            <person name="Tan S.L."/>
            <person name="Tang S."/>
            <person name="Taylor M.S."/>
            <person name="Tegner J."/>
            <person name="Teichmann S.A."/>
            <person name="Ueda H.R."/>
            <person name="van Nimwegen E."/>
            <person name="Verardo R."/>
            <person name="Wei C.L."/>
            <person name="Yagi K."/>
            <person name="Yamanishi H."/>
            <person name="Zabarovsky E."/>
            <person name="Zhu S."/>
            <person name="Zimmer A."/>
            <person name="Hide W."/>
            <person name="Bult C."/>
            <person name="Grimmond S.M."/>
            <person name="Teasdale R.D."/>
            <person name="Liu E.T."/>
            <person name="Brusic V."/>
            <person name="Quackenbush J."/>
            <person name="Wahlestedt C."/>
            <person name="Mattick J.S."/>
            <person name="Hume D.A."/>
            <person name="Kai C."/>
            <person name="Sasaki D."/>
            <person name="Tomaru Y."/>
            <person name="Fukuda S."/>
            <person name="Kanamori-Katayama M."/>
            <person name="Suzuki M."/>
            <person name="Aoki J."/>
            <person name="Arakawa T."/>
            <person name="Iida J."/>
            <person name="Imamura K."/>
            <person name="Itoh M."/>
            <person name="Kato T."/>
            <person name="Kawaji H."/>
            <person name="Kawagashira N."/>
            <person name="Kawashima T."/>
            <person name="Kojima M."/>
            <person name="Kondo S."/>
            <person name="Konno H."/>
            <person name="Nakano K."/>
            <person name="Ninomiya N."/>
            <person name="Nishio T."/>
            <person name="Okada M."/>
            <person name="Plessy C."/>
            <person name="Shibata K."/>
            <person name="Shiraki T."/>
            <person name="Suzuki S."/>
            <person name="Tagami M."/>
            <person name="Waki K."/>
            <person name="Watahiki A."/>
            <person name="Okamura-Oho Y."/>
            <person name="Suzuki H."/>
            <person name="Kawai J."/>
            <person name="Hayashizaki Y."/>
        </authorList>
    </citation>
    <scope>NUCLEOTIDE SEQUENCE [LARGE SCALE MRNA]</scope>
    <source>
        <strain>C57BL/6J</strain>
        <tissue>Muellerian duct</tissue>
    </source>
</reference>
<reference key="5">
    <citation type="journal article" date="2009" name="PLoS Biol.">
        <title>Lineage-specific biology revealed by a finished genome assembly of the mouse.</title>
        <authorList>
            <person name="Church D.M."/>
            <person name="Goodstadt L."/>
            <person name="Hillier L.W."/>
            <person name="Zody M.C."/>
            <person name="Goldstein S."/>
            <person name="She X."/>
            <person name="Bult C.J."/>
            <person name="Agarwala R."/>
            <person name="Cherry J.L."/>
            <person name="DiCuccio M."/>
            <person name="Hlavina W."/>
            <person name="Kapustin Y."/>
            <person name="Meric P."/>
            <person name="Maglott D."/>
            <person name="Birtle Z."/>
            <person name="Marques A.C."/>
            <person name="Graves T."/>
            <person name="Zhou S."/>
            <person name="Teague B."/>
            <person name="Potamousis K."/>
            <person name="Churas C."/>
            <person name="Place M."/>
            <person name="Herschleb J."/>
            <person name="Runnheim R."/>
            <person name="Forrest D."/>
            <person name="Amos-Landgraf J."/>
            <person name="Schwartz D.C."/>
            <person name="Cheng Z."/>
            <person name="Lindblad-Toh K."/>
            <person name="Eichler E.E."/>
            <person name="Ponting C.P."/>
        </authorList>
    </citation>
    <scope>NUCLEOTIDE SEQUENCE [LARGE SCALE GENOMIC DNA]</scope>
    <source>
        <strain>C57BL/6J</strain>
    </source>
</reference>
<reference key="6">
    <citation type="journal article" date="1992" name="Proc. Natl. Acad. Sci. U.S.A.">
        <title>Hox-1.11 and Hox-4.9 homeobox genes.</title>
        <authorList>
            <person name="Nazarali A."/>
            <person name="Kim Y."/>
            <person name="Nirenberg M."/>
        </authorList>
    </citation>
    <scope>NUCLEOTIDE SEQUENCE [GENOMIC DNA] OF 175-198</scope>
</reference>
<reference key="7">
    <citation type="journal article" date="1995" name="Mol. Cell. Biol.">
        <title>Both Pbx1 and E2A-Pbx1 bind the DNA motif ATCAATCAA cooperatively with the products of multiple murine Hox genes, some of which are themselves oncogenes.</title>
        <authorList>
            <person name="Lu Q."/>
            <person name="Knoepfler P.S."/>
            <person name="Scheele J."/>
            <person name="Wright D.D."/>
            <person name="Kamps M.P."/>
        </authorList>
    </citation>
    <scope>INTERACTION WITH PBX1</scope>
</reference>
<sequence length="250" mass="27371">MAMSSYMVNSKYVDPKFPPCEEYLQGGYLGEQGADYYGSGAQGADFQPSGLYPRPDFGEQPFGGGGPGPGSALPARGHGQEPSGPGSHYGAPGERCPAPPPAPLPGARACSQPTGPKQPPPGTALKQPAVVYPWMKKVHVNSVNPNYTGGEPKRSRTAYTRQQVLELEKEFHFNRYLTRRRRIEIAHTLCLSERQIKIWFQNRRMKWKKDHKLPNTKGRSSSSSSCSSSAAPGQHLQPMAKDHHTDLTTL</sequence>
<gene>
    <name type="primary">Hoxd4</name>
    <name type="synonym">Hox-4.2</name>
    <name type="synonym">Hoxd-4</name>
</gene>
<evidence type="ECO:0000255" key="1">
    <source>
        <dbReference type="PROSITE-ProRule" id="PRU00108"/>
    </source>
</evidence>
<evidence type="ECO:0000256" key="2">
    <source>
        <dbReference type="SAM" id="MobiDB-lite"/>
    </source>
</evidence>
<evidence type="ECO:0000269" key="3">
    <source>
    </source>
</evidence>
<evidence type="ECO:0000305" key="4"/>
<accession>P10628</accession>
<accession>A2ASN3</accession>
<accession>P97451</accession>
<accession>Q3UXL6</accession>
<comment type="function">
    <text>Sequence-specific transcription factor which is part of a developmental regulatory system that provides cells with specific positional identities on the anterior-posterior axis.</text>
</comment>
<comment type="subunit">
    <text evidence="3">Forms a DNA-binding heterodimer with transcription factor PBX1.</text>
</comment>
<comment type="subcellular location">
    <subcellularLocation>
        <location>Nucleus</location>
    </subcellularLocation>
</comment>
<comment type="similarity">
    <text evidence="4">Belongs to the Antp homeobox family. Deformed subfamily.</text>
</comment>
<comment type="sequence caution" evidence="4">
    <conflict type="erroneous initiation">
        <sequence resource="EMBL-CDS" id="AAA20072"/>
    </conflict>
</comment>
<protein>
    <recommendedName>
        <fullName>Homeobox protein Hox-D4</fullName>
    </recommendedName>
    <alternativeName>
        <fullName>Homeobox protein Hox-4.2</fullName>
    </alternativeName>
    <alternativeName>
        <fullName>Homeobox protein Hox-5.1</fullName>
    </alternativeName>
</protein>
<name>HXD4_MOUSE</name>
<keyword id="KW-0217">Developmental protein</keyword>
<keyword id="KW-0238">DNA-binding</keyword>
<keyword id="KW-0371">Homeobox</keyword>
<keyword id="KW-0539">Nucleus</keyword>
<keyword id="KW-1185">Reference proteome</keyword>
<keyword id="KW-0804">Transcription</keyword>
<keyword id="KW-0805">Transcription regulation</keyword>
<dbReference type="EMBL" id="J03770">
    <property type="protein sequence ID" value="AAA20072.1"/>
    <property type="status" value="ALT_INIT"/>
    <property type="molecule type" value="mRNA"/>
</dbReference>
<dbReference type="EMBL" id="U77364">
    <property type="protein sequence ID" value="AAB41222.1"/>
    <property type="molecule type" value="Genomic_DNA"/>
</dbReference>
<dbReference type="EMBL" id="AK135479">
    <property type="protein sequence ID" value="BAE22547.1"/>
    <property type="molecule type" value="mRNA"/>
</dbReference>
<dbReference type="EMBL" id="AL928644">
    <property type="status" value="NOT_ANNOTATED_CDS"/>
    <property type="molecule type" value="Genomic_DNA"/>
</dbReference>
<dbReference type="EMBL" id="M87804">
    <property type="protein sequence ID" value="AAA37851.1"/>
    <property type="molecule type" value="Genomic_DNA"/>
</dbReference>
<dbReference type="CCDS" id="CCDS16145.1"/>
<dbReference type="PIR" id="A36170">
    <property type="entry name" value="A36170"/>
</dbReference>
<dbReference type="PIR" id="E42694">
    <property type="entry name" value="E42694"/>
</dbReference>
<dbReference type="RefSeq" id="NP_034599.2">
    <property type="nucleotide sequence ID" value="NM_010469.2"/>
</dbReference>
<dbReference type="SMR" id="P10628"/>
<dbReference type="BioGRID" id="200397">
    <property type="interactions" value="3"/>
</dbReference>
<dbReference type="FunCoup" id="P10628">
    <property type="interactions" value="543"/>
</dbReference>
<dbReference type="IntAct" id="P10628">
    <property type="interactions" value="3"/>
</dbReference>
<dbReference type="STRING" id="10090.ENSMUSP00000047949"/>
<dbReference type="PhosphoSitePlus" id="P10628"/>
<dbReference type="PaxDb" id="10090-ENSMUSP00000047949"/>
<dbReference type="ProteomicsDB" id="267181"/>
<dbReference type="DNASU" id="15436"/>
<dbReference type="Ensembl" id="ENSMUST00000047904.4">
    <property type="protein sequence ID" value="ENSMUSP00000047949.4"/>
    <property type="gene ID" value="ENSMUSG00000101174.9"/>
</dbReference>
<dbReference type="Ensembl" id="ENSMUST00000111980.4">
    <property type="protein sequence ID" value="ENSMUSP00000107611.2"/>
    <property type="gene ID" value="ENSMUSG00000101174.9"/>
</dbReference>
<dbReference type="GeneID" id="15436"/>
<dbReference type="KEGG" id="mmu:15436"/>
<dbReference type="UCSC" id="uc008kef.1">
    <property type="organism name" value="mouse"/>
</dbReference>
<dbReference type="AGR" id="MGI:96208"/>
<dbReference type="CTD" id="3233"/>
<dbReference type="MGI" id="MGI:96208">
    <property type="gene designation" value="Hoxd4"/>
</dbReference>
<dbReference type="VEuPathDB" id="HostDB:ENSMUSG00000101174"/>
<dbReference type="eggNOG" id="KOG0489">
    <property type="taxonomic scope" value="Eukaryota"/>
</dbReference>
<dbReference type="GeneTree" id="ENSGT00940000157270"/>
<dbReference type="HOGENOM" id="CLU_061398_0_0_1"/>
<dbReference type="InParanoid" id="P10628"/>
<dbReference type="OMA" id="PGQGEHC"/>
<dbReference type="OrthoDB" id="6159439at2759"/>
<dbReference type="PhylomeDB" id="P10628"/>
<dbReference type="TreeFam" id="TF352857"/>
<dbReference type="BioGRID-ORCS" id="15436">
    <property type="hits" value="1 hit in 72 CRISPR screens"/>
</dbReference>
<dbReference type="ChiTaRS" id="Hoxd4">
    <property type="organism name" value="mouse"/>
</dbReference>
<dbReference type="PRO" id="PR:P10628"/>
<dbReference type="Proteomes" id="UP000000589">
    <property type="component" value="Chromosome 2"/>
</dbReference>
<dbReference type="RNAct" id="P10628">
    <property type="molecule type" value="protein"/>
</dbReference>
<dbReference type="Bgee" id="ENSMUSG00000101174">
    <property type="expression patterns" value="Expressed in vertebra cartilage element and 105 other cell types or tissues"/>
</dbReference>
<dbReference type="GO" id="GO:0030054">
    <property type="term" value="C:cell junction"/>
    <property type="evidence" value="ECO:0007669"/>
    <property type="project" value="Ensembl"/>
</dbReference>
<dbReference type="GO" id="GO:0005654">
    <property type="term" value="C:nucleoplasm"/>
    <property type="evidence" value="ECO:0000304"/>
    <property type="project" value="Reactome"/>
</dbReference>
<dbReference type="GO" id="GO:0001228">
    <property type="term" value="F:DNA-binding transcription activator activity, RNA polymerase II-specific"/>
    <property type="evidence" value="ECO:0007669"/>
    <property type="project" value="Ensembl"/>
</dbReference>
<dbReference type="GO" id="GO:0000977">
    <property type="term" value="F:RNA polymerase II transcription regulatory region sequence-specific DNA binding"/>
    <property type="evidence" value="ECO:0007669"/>
    <property type="project" value="Ensembl"/>
</dbReference>
<dbReference type="GO" id="GO:0009952">
    <property type="term" value="P:anterior/posterior pattern specification"/>
    <property type="evidence" value="ECO:0000315"/>
    <property type="project" value="MGI"/>
</dbReference>
<dbReference type="GO" id="GO:0048704">
    <property type="term" value="P:embryonic skeletal system morphogenesis"/>
    <property type="evidence" value="ECO:0000315"/>
    <property type="project" value="MGI"/>
</dbReference>
<dbReference type="GO" id="GO:0048863">
    <property type="term" value="P:stem cell differentiation"/>
    <property type="evidence" value="ECO:0000314"/>
    <property type="project" value="MGI"/>
</dbReference>
<dbReference type="CDD" id="cd00086">
    <property type="entry name" value="homeodomain"/>
    <property type="match status" value="1"/>
</dbReference>
<dbReference type="FunFam" id="1.10.10.60:FF:000029">
    <property type="entry name" value="Homeobox protein Hox-D4"/>
    <property type="match status" value="1"/>
</dbReference>
<dbReference type="Gene3D" id="1.10.10.60">
    <property type="entry name" value="Homeodomain-like"/>
    <property type="match status" value="1"/>
</dbReference>
<dbReference type="InterPro" id="IPR050609">
    <property type="entry name" value="Antp_homeobox_Deformed_sf"/>
</dbReference>
<dbReference type="InterPro" id="IPR001356">
    <property type="entry name" value="HD"/>
</dbReference>
<dbReference type="InterPro" id="IPR020479">
    <property type="entry name" value="HD_metazoa"/>
</dbReference>
<dbReference type="InterPro" id="IPR017995">
    <property type="entry name" value="Homeobox_antennapedia"/>
</dbReference>
<dbReference type="InterPro" id="IPR001827">
    <property type="entry name" value="Homeobox_Antennapedia_CS"/>
</dbReference>
<dbReference type="InterPro" id="IPR017970">
    <property type="entry name" value="Homeobox_CS"/>
</dbReference>
<dbReference type="InterPro" id="IPR009057">
    <property type="entry name" value="Homeodomain-like_sf"/>
</dbReference>
<dbReference type="PANTHER" id="PTHR45771:SF5">
    <property type="entry name" value="HOMEOBOX PROTEIN HOX-D4"/>
    <property type="match status" value="1"/>
</dbReference>
<dbReference type="PANTHER" id="PTHR45771">
    <property type="entry name" value="HOMEOTIC PROTEIN DEFORMED"/>
    <property type="match status" value="1"/>
</dbReference>
<dbReference type="Pfam" id="PF00046">
    <property type="entry name" value="Homeodomain"/>
    <property type="match status" value="1"/>
</dbReference>
<dbReference type="PRINTS" id="PR00025">
    <property type="entry name" value="ANTENNAPEDIA"/>
</dbReference>
<dbReference type="PRINTS" id="PR00024">
    <property type="entry name" value="HOMEOBOX"/>
</dbReference>
<dbReference type="SMART" id="SM00389">
    <property type="entry name" value="HOX"/>
    <property type="match status" value="1"/>
</dbReference>
<dbReference type="SUPFAM" id="SSF46689">
    <property type="entry name" value="Homeodomain-like"/>
    <property type="match status" value="1"/>
</dbReference>
<dbReference type="PROSITE" id="PS00032">
    <property type="entry name" value="ANTENNAPEDIA"/>
    <property type="match status" value="1"/>
</dbReference>
<dbReference type="PROSITE" id="PS00027">
    <property type="entry name" value="HOMEOBOX_1"/>
    <property type="match status" value="1"/>
</dbReference>
<dbReference type="PROSITE" id="PS50071">
    <property type="entry name" value="HOMEOBOX_2"/>
    <property type="match status" value="1"/>
</dbReference>